<sequence length="69" mass="8332">MLLYIVIIVACIISKLVPNEYWAIHLFFIIMIFMVYMYKKLDIHQKYQFWNYTMSGLSGHNVQVTCKCY</sequence>
<organism>
    <name type="scientific">African swine fever virus (isolate Tick/Malawi/Lil 20-1/1983)</name>
    <name type="common">ASFV</name>
    <dbReference type="NCBI Taxonomy" id="10500"/>
    <lineage>
        <taxon>Viruses</taxon>
        <taxon>Varidnaviria</taxon>
        <taxon>Bamfordvirae</taxon>
        <taxon>Nucleocytoviricota</taxon>
        <taxon>Pokkesviricetes</taxon>
        <taxon>Asfuvirales</taxon>
        <taxon>Asfarviridae</taxon>
        <taxon>Asfivirus</taxon>
        <taxon>African swine fever virus</taxon>
    </lineage>
</organism>
<dbReference type="EMBL" id="AY261361">
    <property type="status" value="NOT_ANNOTATED_CDS"/>
    <property type="molecule type" value="Genomic_DNA"/>
</dbReference>
<dbReference type="SMR" id="P0CAJ2"/>
<dbReference type="Proteomes" id="UP000000860">
    <property type="component" value="Segment"/>
</dbReference>
<dbReference type="GO" id="GO:0033644">
    <property type="term" value="C:host cell membrane"/>
    <property type="evidence" value="ECO:0007669"/>
    <property type="project" value="UniProtKB-SubCell"/>
</dbReference>
<dbReference type="GO" id="GO:0016020">
    <property type="term" value="C:membrane"/>
    <property type="evidence" value="ECO:0007669"/>
    <property type="project" value="UniProtKB-KW"/>
</dbReference>
<evidence type="ECO:0000255" key="1"/>
<evidence type="ECO:0000305" key="2"/>
<comment type="subcellular location">
    <subcellularLocation>
        <location evidence="2">Host membrane</location>
        <topology evidence="2">Single-pass membrane protein</topology>
    </subcellularLocation>
</comment>
<comment type="similarity">
    <text evidence="2">Belongs to the asfivirus X69R family.</text>
</comment>
<organismHost>
    <name type="scientific">Ornithodoros</name>
    <name type="common">relapsing fever ticks</name>
    <dbReference type="NCBI Taxonomy" id="6937"/>
</organismHost>
<organismHost>
    <name type="scientific">Phacochoerus aethiopicus</name>
    <name type="common">Warthog</name>
    <dbReference type="NCBI Taxonomy" id="85517"/>
</organismHost>
<organismHost>
    <name type="scientific">Phacochoerus africanus</name>
    <name type="common">Warthog</name>
    <dbReference type="NCBI Taxonomy" id="41426"/>
</organismHost>
<organismHost>
    <name type="scientific">Potamochoerus larvatus</name>
    <name type="common">Bushpig</name>
    <dbReference type="NCBI Taxonomy" id="273792"/>
</organismHost>
<organismHost>
    <name type="scientific">Sus scrofa</name>
    <name type="common">Pig</name>
    <dbReference type="NCBI Taxonomy" id="9823"/>
</organismHost>
<gene>
    <name type="ordered locus">Mal-022</name>
</gene>
<protein>
    <recommendedName>
        <fullName>Uncharacterized membrane protein X69R</fullName>
    </recommendedName>
</protein>
<feature type="chain" id="PRO_0000373717" description="Uncharacterized membrane protein X69R">
    <location>
        <begin position="1"/>
        <end position="69"/>
    </location>
</feature>
<feature type="topological domain" description="Cytoplasmic" evidence="1">
    <location>
        <begin position="1"/>
        <end position="15"/>
    </location>
</feature>
<feature type="transmembrane region" description="Helical" evidence="1">
    <location>
        <begin position="16"/>
        <end position="36"/>
    </location>
</feature>
<feature type="topological domain" description="Extracellular" evidence="1">
    <location>
        <begin position="37"/>
        <end position="69"/>
    </location>
</feature>
<feature type="glycosylation site" description="N-linked (GlcNAc...) asparagine; by host" evidence="1">
    <location>
        <position position="51"/>
    </location>
</feature>
<keyword id="KW-0325">Glycoprotein</keyword>
<keyword id="KW-1043">Host membrane</keyword>
<keyword id="KW-0472">Membrane</keyword>
<keyword id="KW-0812">Transmembrane</keyword>
<keyword id="KW-1133">Transmembrane helix</keyword>
<reference key="1">
    <citation type="submission" date="2003-03" db="EMBL/GenBank/DDBJ databases">
        <title>African swine fever virus genomes.</title>
        <authorList>
            <person name="Kutish G.F."/>
            <person name="Rock D.L."/>
        </authorList>
    </citation>
    <scope>NUCLEOTIDE SEQUENCE [LARGE SCALE GENOMIC DNA]</scope>
</reference>
<proteinExistence type="inferred from homology"/>
<name>VF69R_ASFM2</name>
<accession>P0CAJ2</accession>